<comment type="function">
    <text evidence="1">Involved in the selective degradation of mitochondria via autophagy during starvation and at post-log phase.</text>
</comment>
<comment type="subcellular location">
    <subcellularLocation>
        <location evidence="5">Mitochondrion membrane</location>
        <topology evidence="5">Multi-pass membrane protein</topology>
    </subcellularLocation>
</comment>
<comment type="similarity">
    <text evidence="5">Belongs to the ATG33 family.</text>
</comment>
<gene>
    <name type="primary">ATG33</name>
    <name type="ORF">C1Q_03121</name>
</gene>
<reference key="1">
    <citation type="journal article" date="2009" name="Genome Res.">
        <title>Genome structure of a Saccharomyces cerevisiae strain widely used in bioethanol production.</title>
        <authorList>
            <person name="Argueso J.L."/>
            <person name="Carazzolle M.F."/>
            <person name="Mieczkowski P.A."/>
            <person name="Duarte F.M."/>
            <person name="Netto O.V.C."/>
            <person name="Missawa S.K."/>
            <person name="Galzerani F."/>
            <person name="Costa G.G.L."/>
            <person name="Vidal R.O."/>
            <person name="Noronha M.F."/>
            <person name="Dominska M."/>
            <person name="Andrietta M.G.S."/>
            <person name="Andrietta S.R."/>
            <person name="Cunha A.F."/>
            <person name="Gomes L.H."/>
            <person name="Tavares F.C.A."/>
            <person name="Alcarde A.R."/>
            <person name="Dietrich F.S."/>
            <person name="McCusker J.H."/>
            <person name="Petes T.D."/>
            <person name="Pereira G.A.G."/>
        </authorList>
    </citation>
    <scope>NUCLEOTIDE SEQUENCE [LARGE SCALE GENOMIC DNA]</scope>
    <source>
        <strain>JAY291</strain>
    </source>
</reference>
<evidence type="ECO:0000250" key="1"/>
<evidence type="ECO:0000250" key="2">
    <source>
        <dbReference type="UniProtKB" id="Q06485"/>
    </source>
</evidence>
<evidence type="ECO:0000255" key="3"/>
<evidence type="ECO:0000256" key="4">
    <source>
        <dbReference type="SAM" id="MobiDB-lite"/>
    </source>
</evidence>
<evidence type="ECO:0000305" key="5"/>
<accession>C7GRY1</accession>
<name>ATG33_YEAS2</name>
<feature type="chain" id="PRO_0000399770" description="Autophagy-related protein 33">
    <location>
        <begin position="1"/>
        <end position="197"/>
    </location>
</feature>
<feature type="transmembrane region" description="Helical" evidence="3">
    <location>
        <begin position="10"/>
        <end position="30"/>
    </location>
</feature>
<feature type="transmembrane region" description="Helical" evidence="3">
    <location>
        <begin position="52"/>
        <end position="72"/>
    </location>
</feature>
<feature type="transmembrane region" description="Helical" evidence="3">
    <location>
        <begin position="78"/>
        <end position="98"/>
    </location>
</feature>
<feature type="transmembrane region" description="Helical" evidence="3">
    <location>
        <begin position="172"/>
        <end position="192"/>
    </location>
</feature>
<feature type="region of interest" description="Disordered" evidence="4">
    <location>
        <begin position="135"/>
        <end position="154"/>
    </location>
</feature>
<feature type="compositionally biased region" description="Basic and acidic residues" evidence="4">
    <location>
        <begin position="135"/>
        <end position="148"/>
    </location>
</feature>
<feature type="modified residue" description="Phosphoserine" evidence="2">
    <location>
        <position position="127"/>
    </location>
</feature>
<feature type="modified residue" description="Phosphoserine" evidence="2">
    <location>
        <position position="129"/>
    </location>
</feature>
<keyword id="KW-0072">Autophagy</keyword>
<keyword id="KW-0472">Membrane</keyword>
<keyword id="KW-0496">Mitochondrion</keyword>
<keyword id="KW-0597">Phosphoprotein</keyword>
<keyword id="KW-0812">Transmembrane</keyword>
<keyword id="KW-1133">Transmembrane helix</keyword>
<dbReference type="EMBL" id="ACFL01000161">
    <property type="protein sequence ID" value="EEU06455.1"/>
    <property type="molecule type" value="Genomic_DNA"/>
</dbReference>
<dbReference type="Proteomes" id="UP000008073">
    <property type="component" value="Unassembled WGS sequence"/>
</dbReference>
<dbReference type="GO" id="GO:0005741">
    <property type="term" value="C:mitochondrial outer membrane"/>
    <property type="evidence" value="ECO:0007669"/>
    <property type="project" value="TreeGrafter"/>
</dbReference>
<dbReference type="GO" id="GO:0000422">
    <property type="term" value="P:autophagy of mitochondrion"/>
    <property type="evidence" value="ECO:0007669"/>
    <property type="project" value="TreeGrafter"/>
</dbReference>
<dbReference type="GO" id="GO:0016236">
    <property type="term" value="P:macroautophagy"/>
    <property type="evidence" value="ECO:0007669"/>
    <property type="project" value="TreeGrafter"/>
</dbReference>
<dbReference type="InterPro" id="IPR051668">
    <property type="entry name" value="ATG33"/>
</dbReference>
<dbReference type="PANTHER" id="PTHR37278">
    <property type="entry name" value="AUTOPHAGY-RELATED PROTEIN 33-RELATED"/>
    <property type="match status" value="1"/>
</dbReference>
<dbReference type="PANTHER" id="PTHR37278:SF1">
    <property type="entry name" value="AUTOPHAGY-RELATED PROTEIN 33-RELATED"/>
    <property type="match status" value="1"/>
</dbReference>
<protein>
    <recommendedName>
        <fullName>Autophagy-related protein 33</fullName>
    </recommendedName>
</protein>
<organism>
    <name type="scientific">Saccharomyces cerevisiae (strain JAY291)</name>
    <name type="common">Baker's yeast</name>
    <dbReference type="NCBI Taxonomy" id="574961"/>
    <lineage>
        <taxon>Eukaryota</taxon>
        <taxon>Fungi</taxon>
        <taxon>Dikarya</taxon>
        <taxon>Ascomycota</taxon>
        <taxon>Saccharomycotina</taxon>
        <taxon>Saccharomycetes</taxon>
        <taxon>Saccharomycetales</taxon>
        <taxon>Saccharomycetaceae</taxon>
        <taxon>Saccharomyces</taxon>
    </lineage>
</organism>
<proteinExistence type="inferred from homology"/>
<sequence>MSVCLAITKGIAVSSIGLYSGLLASASLITSTTPLEVLTGSLTPTLTTLKNAATALGAFASTFFCVSFFGAPPSLRHPYLLYGMLAAPLSSFVLGCASNYQSRKYSKVSKESSLFPEDSKPAASELSDSIIDLGEDNHASENTPRDGKPAATTVSKPAEALHTGPPIHTKNLIAATAIAIVGFVQAVIGVYGEGQFI</sequence>